<name>GET3_MOUSE</name>
<comment type="function">
    <text evidence="2 4">ATPase required for the post-translational delivery of tail-anchored (TA) proteins to the endoplasmic reticulum. Recognizes and selectively binds the transmembrane domain of TA proteins in the cytosol. This complex then targets to the endoplasmic reticulum by membrane-bound receptors GET1/WRB and CAMLG/GET2, where the tail-anchored protein is released for insertion. This process is regulated by ATP binding and hydrolysis. ATP binding drives the homodimer towards the closed dimer state, facilitating recognition of newly synthesized TA membrane proteins. ATP hydrolysis is required for insertion. Subsequently, the homodimer reverts towards the open dimer state, lowering its affinity for the GET1-CAMLG receptor, and returning it to the cytosol to initiate a new round of targeting. May be involved in insulin signaling.</text>
</comment>
<comment type="catalytic activity">
    <reaction evidence="2">
        <text>ATP + H2O = ADP + phosphate + H(+)</text>
        <dbReference type="Rhea" id="RHEA:13065"/>
        <dbReference type="ChEBI" id="CHEBI:15377"/>
        <dbReference type="ChEBI" id="CHEBI:15378"/>
        <dbReference type="ChEBI" id="CHEBI:30616"/>
        <dbReference type="ChEBI" id="CHEBI:43474"/>
        <dbReference type="ChEBI" id="CHEBI:456216"/>
    </reaction>
</comment>
<comment type="subunit">
    <text evidence="1 2 4">Homodimer (By similarity). Component of the Golgi to ER traffic (GET) complex, which is composed of GET1/WRB, CAMLG/GET2 and GET3/TRC40. Within the complex, CAMLG and GET1 form a heterotetramer which is stabilized by phosphatidylinositol binding and which binds to the GET3 homodimer (By similarity). Interacts with CAMLG (via N-terminus) (By similarity). GET3 shows a higher affinity for CAMLG than for GET1. Interacts with SERP1 and SEC61B (By similarity). Interacts with GET4 (By similarity).</text>
</comment>
<comment type="subcellular location">
    <subcellularLocation>
        <location evidence="2 4">Cytoplasm</location>
    </subcellularLocation>
    <subcellularLocation>
        <location evidence="2 4">Endoplasmic reticulum</location>
    </subcellularLocation>
    <subcellularLocation>
        <location evidence="2 4">Nucleus</location>
        <location evidence="2 4">Nucleolus</location>
    </subcellularLocation>
</comment>
<comment type="disruption phenotype">
    <text evidence="5">Causes early embryonic lethality.</text>
</comment>
<comment type="similarity">
    <text evidence="4">Belongs to the arsA ATPase family.</text>
</comment>
<dbReference type="EC" id="3.6.4.-" evidence="2"/>
<dbReference type="EMBL" id="AF039405">
    <property type="protein sequence ID" value="AAB94772.2"/>
    <property type="molecule type" value="mRNA"/>
</dbReference>
<dbReference type="EMBL" id="AF061177">
    <property type="protein sequence ID" value="AAD15826.2"/>
    <property type="molecule type" value="Genomic_DNA"/>
</dbReference>
<dbReference type="EMBL" id="BC016453">
    <property type="protein sequence ID" value="AAH16453.1"/>
    <property type="molecule type" value="mRNA"/>
</dbReference>
<dbReference type="EMBL" id="BC083335">
    <property type="protein sequence ID" value="AAH83335.1"/>
    <property type="molecule type" value="mRNA"/>
</dbReference>
<dbReference type="EMBL" id="AK171690">
    <property type="protein sequence ID" value="BAE42614.1"/>
    <property type="molecule type" value="mRNA"/>
</dbReference>
<dbReference type="EMBL" id="CH466525">
    <property type="protein sequence ID" value="EDL10985.1"/>
    <property type="molecule type" value="Genomic_DNA"/>
</dbReference>
<dbReference type="CCDS" id="CCDS40417.1"/>
<dbReference type="RefSeq" id="NP_062626.1">
    <property type="nucleotide sequence ID" value="NM_019652.2"/>
</dbReference>
<dbReference type="SMR" id="O54984"/>
<dbReference type="BioGRID" id="208019">
    <property type="interactions" value="20"/>
</dbReference>
<dbReference type="FunCoup" id="O54984">
    <property type="interactions" value="3228"/>
</dbReference>
<dbReference type="IntAct" id="O54984">
    <property type="interactions" value="6"/>
</dbReference>
<dbReference type="STRING" id="10090.ENSMUSP00000065337"/>
<dbReference type="GlyGen" id="O54984">
    <property type="glycosylation" value="1 site, 1 O-linked glycan (1 site)"/>
</dbReference>
<dbReference type="iPTMnet" id="O54984"/>
<dbReference type="PhosphoSitePlus" id="O54984"/>
<dbReference type="SwissPalm" id="O54984"/>
<dbReference type="REPRODUCTION-2DPAGE" id="O54984"/>
<dbReference type="jPOST" id="O54984"/>
<dbReference type="PaxDb" id="10090-ENSMUSP00000065337"/>
<dbReference type="PeptideAtlas" id="O54984"/>
<dbReference type="ProteomicsDB" id="281815"/>
<dbReference type="Pumba" id="O54984"/>
<dbReference type="Antibodypedia" id="26148">
    <property type="antibodies" value="361 antibodies from 36 providers"/>
</dbReference>
<dbReference type="DNASU" id="56495"/>
<dbReference type="Ensembl" id="ENSMUST00000064314.10">
    <property type="protein sequence ID" value="ENSMUSP00000065337.9"/>
    <property type="gene ID" value="ENSMUSG00000052456.10"/>
</dbReference>
<dbReference type="GeneID" id="56495"/>
<dbReference type="KEGG" id="mmu:56495"/>
<dbReference type="UCSC" id="uc009mox.1">
    <property type="organism name" value="mouse"/>
</dbReference>
<dbReference type="AGR" id="MGI:1928379"/>
<dbReference type="CTD" id="439"/>
<dbReference type="MGI" id="MGI:1928379">
    <property type="gene designation" value="Get3"/>
</dbReference>
<dbReference type="VEuPathDB" id="HostDB:ENSMUSG00000052456"/>
<dbReference type="eggNOG" id="KOG2825">
    <property type="taxonomic scope" value="Eukaryota"/>
</dbReference>
<dbReference type="GeneTree" id="ENSGT00390000003817"/>
<dbReference type="HOGENOM" id="CLU_040761_0_0_1"/>
<dbReference type="InParanoid" id="O54984"/>
<dbReference type="OMA" id="MDAPYEF"/>
<dbReference type="OrthoDB" id="1770at2759"/>
<dbReference type="PhylomeDB" id="O54984"/>
<dbReference type="TreeFam" id="TF300670"/>
<dbReference type="BioGRID-ORCS" id="56495">
    <property type="hits" value="28 hits in 80 CRISPR screens"/>
</dbReference>
<dbReference type="ChiTaRS" id="Arsa">
    <property type="organism name" value="mouse"/>
</dbReference>
<dbReference type="PRO" id="PR:O54984"/>
<dbReference type="Proteomes" id="UP000000589">
    <property type="component" value="Chromosome 8"/>
</dbReference>
<dbReference type="RNAct" id="O54984">
    <property type="molecule type" value="protein"/>
</dbReference>
<dbReference type="Bgee" id="ENSMUSG00000052456">
    <property type="expression patterns" value="Expressed in embryonic brain and 270 other cell types or tissues"/>
</dbReference>
<dbReference type="ExpressionAtlas" id="O54984">
    <property type="expression patterns" value="baseline and differential"/>
</dbReference>
<dbReference type="GO" id="GO:0005789">
    <property type="term" value="C:endoplasmic reticulum membrane"/>
    <property type="evidence" value="ECO:0007669"/>
    <property type="project" value="Ensembl"/>
</dbReference>
<dbReference type="GO" id="GO:0043529">
    <property type="term" value="C:GET complex"/>
    <property type="evidence" value="ECO:0000250"/>
    <property type="project" value="UniProtKB"/>
</dbReference>
<dbReference type="GO" id="GO:0005730">
    <property type="term" value="C:nucleolus"/>
    <property type="evidence" value="ECO:0007669"/>
    <property type="project" value="UniProtKB-SubCell"/>
</dbReference>
<dbReference type="GO" id="GO:0005654">
    <property type="term" value="C:nucleoplasm"/>
    <property type="evidence" value="ECO:0007669"/>
    <property type="project" value="Ensembl"/>
</dbReference>
<dbReference type="GO" id="GO:0005524">
    <property type="term" value="F:ATP binding"/>
    <property type="evidence" value="ECO:0007669"/>
    <property type="project" value="UniProtKB-UniRule"/>
</dbReference>
<dbReference type="GO" id="GO:0016887">
    <property type="term" value="F:ATP hydrolysis activity"/>
    <property type="evidence" value="ECO:0007669"/>
    <property type="project" value="Ensembl"/>
</dbReference>
<dbReference type="GO" id="GO:0032977">
    <property type="term" value="F:membrane insertase activity"/>
    <property type="evidence" value="ECO:0007669"/>
    <property type="project" value="Ensembl"/>
</dbReference>
<dbReference type="GO" id="GO:0046872">
    <property type="term" value="F:metal ion binding"/>
    <property type="evidence" value="ECO:0007669"/>
    <property type="project" value="UniProtKB-KW"/>
</dbReference>
<dbReference type="GO" id="GO:0006620">
    <property type="term" value="P:post-translational protein targeting to endoplasmic reticulum membrane"/>
    <property type="evidence" value="ECO:0000266"/>
    <property type="project" value="MGI"/>
</dbReference>
<dbReference type="GO" id="GO:0071816">
    <property type="term" value="P:tail-anchored membrane protein insertion into ER membrane"/>
    <property type="evidence" value="ECO:0000250"/>
    <property type="project" value="UniProtKB"/>
</dbReference>
<dbReference type="CDD" id="cd02035">
    <property type="entry name" value="ArsA"/>
    <property type="match status" value="1"/>
</dbReference>
<dbReference type="FunFam" id="3.40.50.300:FF:000235">
    <property type="entry name" value="ATPase ASNA1"/>
    <property type="match status" value="1"/>
</dbReference>
<dbReference type="Gene3D" id="3.40.50.300">
    <property type="entry name" value="P-loop containing nucleotide triphosphate hydrolases"/>
    <property type="match status" value="1"/>
</dbReference>
<dbReference type="HAMAP" id="MF_03112">
    <property type="entry name" value="Asna1_Get3"/>
    <property type="match status" value="1"/>
</dbReference>
<dbReference type="InterPro" id="IPR025723">
    <property type="entry name" value="Anion-transp_ATPase-like_dom"/>
</dbReference>
<dbReference type="InterPro" id="IPR016300">
    <property type="entry name" value="ATPase_ArsA/GET3"/>
</dbReference>
<dbReference type="InterPro" id="IPR027542">
    <property type="entry name" value="ATPase_ArsA/GET3_euk"/>
</dbReference>
<dbReference type="InterPro" id="IPR027417">
    <property type="entry name" value="P-loop_NTPase"/>
</dbReference>
<dbReference type="NCBIfam" id="TIGR00345">
    <property type="entry name" value="GET3_arsA_TRC40"/>
    <property type="match status" value="1"/>
</dbReference>
<dbReference type="PANTHER" id="PTHR10803">
    <property type="entry name" value="ARSENICAL PUMP-DRIVING ATPASE ARSENITE-TRANSLOCATING ATPASE"/>
    <property type="match status" value="1"/>
</dbReference>
<dbReference type="PANTHER" id="PTHR10803:SF3">
    <property type="entry name" value="ATPASE GET3"/>
    <property type="match status" value="1"/>
</dbReference>
<dbReference type="Pfam" id="PF02374">
    <property type="entry name" value="ArsA_ATPase"/>
    <property type="match status" value="1"/>
</dbReference>
<dbReference type="SUPFAM" id="SSF52540">
    <property type="entry name" value="P-loop containing nucleoside triphosphate hydrolases"/>
    <property type="match status" value="1"/>
</dbReference>
<sequence length="348" mass="38823">MAAGVAGWGVEAEEFEDAPDVEPLEPTLSNIIEQRSLKWIFVGGKGGVGKTTCSCSLAVQLSKGRESVLIISTDPAHNISDAFDQKFSKVPTKVKGYDNLFAMEIDPSLGVAELPDEFFEEDNMLSMGKKMMQEAMSAFPGIDEAMSYAEVMRLVKGMNFSVVVFDTAPTGHTLRLLNFPTIVERGLGRLMQIKNQISPFISQMCNMLGLGDMNADQLASKLEETLPVIRSVSEQFKDPEQTTFICVCIAEFLSLYETERLIQELAKCKIDTHNIIVNQLVFPDPEKPCKMCEARHKIQAKYLDQMEDLYEDFHIVKLPLLPHEVRGADKVNTFSALLLEPYKPPSTQ</sequence>
<reference key="1">
    <citation type="journal article" date="2001" name="Gene">
        <title>Genomic organization and chromosomal localization of the Asna1 gene, a mouse homologue of a bacterial arsenic-translocating ATPase gene.</title>
        <authorList>
            <person name="Bhattacharjee H."/>
            <person name="Ho Y.-S."/>
            <person name="Rosen B.P."/>
        </authorList>
    </citation>
    <scope>NUCLEOTIDE SEQUENCE [GENOMIC DNA]</scope>
</reference>
<reference key="2">
    <citation type="journal article" date="2004" name="Genome Res.">
        <title>The status, quality, and expansion of the NIH full-length cDNA project: the Mammalian Gene Collection (MGC).</title>
        <authorList>
            <consortium name="The MGC Project Team"/>
        </authorList>
    </citation>
    <scope>NUCLEOTIDE SEQUENCE [LARGE SCALE MRNA]</scope>
    <source>
        <strain>C57BL/6J</strain>
        <strain>FVB/N</strain>
        <tissue>Brain</tissue>
        <tissue>Salivary gland</tissue>
    </source>
</reference>
<reference key="3">
    <citation type="journal article" date="2005" name="Science">
        <title>The transcriptional landscape of the mammalian genome.</title>
        <authorList>
            <person name="Carninci P."/>
            <person name="Kasukawa T."/>
            <person name="Katayama S."/>
            <person name="Gough J."/>
            <person name="Frith M.C."/>
            <person name="Maeda N."/>
            <person name="Oyama R."/>
            <person name="Ravasi T."/>
            <person name="Lenhard B."/>
            <person name="Wells C."/>
            <person name="Kodzius R."/>
            <person name="Shimokawa K."/>
            <person name="Bajic V.B."/>
            <person name="Brenner S.E."/>
            <person name="Batalov S."/>
            <person name="Forrest A.R."/>
            <person name="Zavolan M."/>
            <person name="Davis M.J."/>
            <person name="Wilming L.G."/>
            <person name="Aidinis V."/>
            <person name="Allen J.E."/>
            <person name="Ambesi-Impiombato A."/>
            <person name="Apweiler R."/>
            <person name="Aturaliya R.N."/>
            <person name="Bailey T.L."/>
            <person name="Bansal M."/>
            <person name="Baxter L."/>
            <person name="Beisel K.W."/>
            <person name="Bersano T."/>
            <person name="Bono H."/>
            <person name="Chalk A.M."/>
            <person name="Chiu K.P."/>
            <person name="Choudhary V."/>
            <person name="Christoffels A."/>
            <person name="Clutterbuck D.R."/>
            <person name="Crowe M.L."/>
            <person name="Dalla E."/>
            <person name="Dalrymple B.P."/>
            <person name="de Bono B."/>
            <person name="Della Gatta G."/>
            <person name="di Bernardo D."/>
            <person name="Down T."/>
            <person name="Engstrom P."/>
            <person name="Fagiolini M."/>
            <person name="Faulkner G."/>
            <person name="Fletcher C.F."/>
            <person name="Fukushima T."/>
            <person name="Furuno M."/>
            <person name="Futaki S."/>
            <person name="Gariboldi M."/>
            <person name="Georgii-Hemming P."/>
            <person name="Gingeras T.R."/>
            <person name="Gojobori T."/>
            <person name="Green R.E."/>
            <person name="Gustincich S."/>
            <person name="Harbers M."/>
            <person name="Hayashi Y."/>
            <person name="Hensch T.K."/>
            <person name="Hirokawa N."/>
            <person name="Hill D."/>
            <person name="Huminiecki L."/>
            <person name="Iacono M."/>
            <person name="Ikeo K."/>
            <person name="Iwama A."/>
            <person name="Ishikawa T."/>
            <person name="Jakt M."/>
            <person name="Kanapin A."/>
            <person name="Katoh M."/>
            <person name="Kawasawa Y."/>
            <person name="Kelso J."/>
            <person name="Kitamura H."/>
            <person name="Kitano H."/>
            <person name="Kollias G."/>
            <person name="Krishnan S.P."/>
            <person name="Kruger A."/>
            <person name="Kummerfeld S.K."/>
            <person name="Kurochkin I.V."/>
            <person name="Lareau L.F."/>
            <person name="Lazarevic D."/>
            <person name="Lipovich L."/>
            <person name="Liu J."/>
            <person name="Liuni S."/>
            <person name="McWilliam S."/>
            <person name="Madan Babu M."/>
            <person name="Madera M."/>
            <person name="Marchionni L."/>
            <person name="Matsuda H."/>
            <person name="Matsuzawa S."/>
            <person name="Miki H."/>
            <person name="Mignone F."/>
            <person name="Miyake S."/>
            <person name="Morris K."/>
            <person name="Mottagui-Tabar S."/>
            <person name="Mulder N."/>
            <person name="Nakano N."/>
            <person name="Nakauchi H."/>
            <person name="Ng P."/>
            <person name="Nilsson R."/>
            <person name="Nishiguchi S."/>
            <person name="Nishikawa S."/>
            <person name="Nori F."/>
            <person name="Ohara O."/>
            <person name="Okazaki Y."/>
            <person name="Orlando V."/>
            <person name="Pang K.C."/>
            <person name="Pavan W.J."/>
            <person name="Pavesi G."/>
            <person name="Pesole G."/>
            <person name="Petrovsky N."/>
            <person name="Piazza S."/>
            <person name="Reed J."/>
            <person name="Reid J.F."/>
            <person name="Ring B.Z."/>
            <person name="Ringwald M."/>
            <person name="Rost B."/>
            <person name="Ruan Y."/>
            <person name="Salzberg S.L."/>
            <person name="Sandelin A."/>
            <person name="Schneider C."/>
            <person name="Schoenbach C."/>
            <person name="Sekiguchi K."/>
            <person name="Semple C.A."/>
            <person name="Seno S."/>
            <person name="Sessa L."/>
            <person name="Sheng Y."/>
            <person name="Shibata Y."/>
            <person name="Shimada H."/>
            <person name="Shimada K."/>
            <person name="Silva D."/>
            <person name="Sinclair B."/>
            <person name="Sperling S."/>
            <person name="Stupka E."/>
            <person name="Sugiura K."/>
            <person name="Sultana R."/>
            <person name="Takenaka Y."/>
            <person name="Taki K."/>
            <person name="Tammoja K."/>
            <person name="Tan S.L."/>
            <person name="Tang S."/>
            <person name="Taylor M.S."/>
            <person name="Tegner J."/>
            <person name="Teichmann S.A."/>
            <person name="Ueda H.R."/>
            <person name="van Nimwegen E."/>
            <person name="Verardo R."/>
            <person name="Wei C.L."/>
            <person name="Yagi K."/>
            <person name="Yamanishi H."/>
            <person name="Zabarovsky E."/>
            <person name="Zhu S."/>
            <person name="Zimmer A."/>
            <person name="Hide W."/>
            <person name="Bult C."/>
            <person name="Grimmond S.M."/>
            <person name="Teasdale R.D."/>
            <person name="Liu E.T."/>
            <person name="Brusic V."/>
            <person name="Quackenbush J."/>
            <person name="Wahlestedt C."/>
            <person name="Mattick J.S."/>
            <person name="Hume D.A."/>
            <person name="Kai C."/>
            <person name="Sasaki D."/>
            <person name="Tomaru Y."/>
            <person name="Fukuda S."/>
            <person name="Kanamori-Katayama M."/>
            <person name="Suzuki M."/>
            <person name="Aoki J."/>
            <person name="Arakawa T."/>
            <person name="Iida J."/>
            <person name="Imamura K."/>
            <person name="Itoh M."/>
            <person name="Kato T."/>
            <person name="Kawaji H."/>
            <person name="Kawagashira N."/>
            <person name="Kawashima T."/>
            <person name="Kojima M."/>
            <person name="Kondo S."/>
            <person name="Konno H."/>
            <person name="Nakano K."/>
            <person name="Ninomiya N."/>
            <person name="Nishio T."/>
            <person name="Okada M."/>
            <person name="Plessy C."/>
            <person name="Shibata K."/>
            <person name="Shiraki T."/>
            <person name="Suzuki S."/>
            <person name="Tagami M."/>
            <person name="Waki K."/>
            <person name="Watahiki A."/>
            <person name="Okamura-Oho Y."/>
            <person name="Suzuki H."/>
            <person name="Kawai J."/>
            <person name="Hayashizaki Y."/>
        </authorList>
    </citation>
    <scope>NUCLEOTIDE SEQUENCE [LARGE SCALE MRNA]</scope>
    <source>
        <strain>NOD</strain>
        <tissue>Spleen</tissue>
    </source>
</reference>
<reference key="4">
    <citation type="submission" date="2005-07" db="EMBL/GenBank/DDBJ databases">
        <authorList>
            <person name="Mural R.J."/>
            <person name="Adams M.D."/>
            <person name="Myers E.W."/>
            <person name="Smith H.O."/>
            <person name="Venter J.C."/>
        </authorList>
    </citation>
    <scope>NUCLEOTIDE SEQUENCE [LARGE SCALE GENOMIC DNA]</scope>
</reference>
<reference key="5">
    <citation type="journal article" date="2006" name="FEBS Lett.">
        <title>Targeted disruption of the mouse Asna1 gene results in embryonic lethality.</title>
        <authorList>
            <person name="Mukhopadhyay R."/>
            <person name="Ho Y.S."/>
            <person name="Swiatek P.J."/>
            <person name="Rosen B.P."/>
            <person name="Bhattacharjee H."/>
        </authorList>
    </citation>
    <scope>DISRUPTION PHENOTYPE</scope>
</reference>
<reference key="6">
    <citation type="submission" date="2007-04" db="UniProtKB">
        <authorList>
            <person name="Lubec G."/>
            <person name="Kang S.U."/>
        </authorList>
    </citation>
    <scope>PROTEIN SEQUENCE OF 66-86; 157-185 AND 261-267</scope>
    <scope>IDENTIFICATION BY MASS SPECTROMETRY</scope>
    <source>
        <strain>C57BL/6J</strain>
        <tissue>Brain</tissue>
    </source>
</reference>
<reference key="7">
    <citation type="journal article" date="2010" name="Cell">
        <title>A tissue-specific atlas of mouse protein phosphorylation and expression.</title>
        <authorList>
            <person name="Huttlin E.L."/>
            <person name="Jedrychowski M.P."/>
            <person name="Elias J.E."/>
            <person name="Goswami T."/>
            <person name="Rad R."/>
            <person name="Beausoleil S.A."/>
            <person name="Villen J."/>
            <person name="Haas W."/>
            <person name="Sowa M.E."/>
            <person name="Gygi S.P."/>
        </authorList>
    </citation>
    <scope>IDENTIFICATION BY MASS SPECTROMETRY [LARGE SCALE ANALYSIS]</scope>
    <source>
        <tissue>Brain</tissue>
        <tissue>Brown adipose tissue</tissue>
        <tissue>Heart</tissue>
        <tissue>Kidney</tissue>
        <tissue>Liver</tissue>
        <tissue>Lung</tissue>
        <tissue>Pancreas</tissue>
        <tissue>Spleen</tissue>
        <tissue>Testis</tissue>
    </source>
</reference>
<accession>O54984</accession>
<accession>Q3TAQ4</accession>
<organism>
    <name type="scientific">Mus musculus</name>
    <name type="common">Mouse</name>
    <dbReference type="NCBI Taxonomy" id="10090"/>
    <lineage>
        <taxon>Eukaryota</taxon>
        <taxon>Metazoa</taxon>
        <taxon>Chordata</taxon>
        <taxon>Craniata</taxon>
        <taxon>Vertebrata</taxon>
        <taxon>Euteleostomi</taxon>
        <taxon>Mammalia</taxon>
        <taxon>Eutheria</taxon>
        <taxon>Euarchontoglires</taxon>
        <taxon>Glires</taxon>
        <taxon>Rodentia</taxon>
        <taxon>Myomorpha</taxon>
        <taxon>Muroidea</taxon>
        <taxon>Muridae</taxon>
        <taxon>Murinae</taxon>
        <taxon>Mus</taxon>
        <taxon>Mus</taxon>
    </lineage>
</organism>
<proteinExistence type="evidence at protein level"/>
<gene>
    <name evidence="4" type="primary">Get3</name>
    <name evidence="6" type="synonym">Arsa</name>
    <name evidence="4" type="synonym">Asna1</name>
</gene>
<protein>
    <recommendedName>
        <fullName evidence="4">ATPase GET3</fullName>
        <ecNumber evidence="2">3.6.4.-</ecNumber>
    </recommendedName>
    <alternativeName>
        <fullName evidence="4">Arsenical pump-driving ATPase</fullName>
    </alternativeName>
    <alternativeName>
        <fullName evidence="4">Arsenite-stimulated ATPase</fullName>
    </alternativeName>
    <alternativeName>
        <fullName evidence="4">Guided entry of tail-anchored proteins factor 3, ATPase</fullName>
    </alternativeName>
</protein>
<keyword id="KW-0007">Acetylation</keyword>
<keyword id="KW-0067">ATP-binding</keyword>
<keyword id="KW-0963">Cytoplasm</keyword>
<keyword id="KW-0903">Direct protein sequencing</keyword>
<keyword id="KW-0256">Endoplasmic reticulum</keyword>
<keyword id="KW-0378">Hydrolase</keyword>
<keyword id="KW-0479">Metal-binding</keyword>
<keyword id="KW-0547">Nucleotide-binding</keyword>
<keyword id="KW-0539">Nucleus</keyword>
<keyword id="KW-1185">Reference proteome</keyword>
<keyword id="KW-0813">Transport</keyword>
<keyword id="KW-0862">Zinc</keyword>
<evidence type="ECO:0000250" key="1">
    <source>
        <dbReference type="UniProtKB" id="G3V9T7"/>
    </source>
</evidence>
<evidence type="ECO:0000250" key="2">
    <source>
        <dbReference type="UniProtKB" id="O43681"/>
    </source>
</evidence>
<evidence type="ECO:0000250" key="3">
    <source>
        <dbReference type="UniProtKB" id="Q6IQE5"/>
    </source>
</evidence>
<evidence type="ECO:0000255" key="4">
    <source>
        <dbReference type="HAMAP-Rule" id="MF_03112"/>
    </source>
</evidence>
<evidence type="ECO:0000269" key="5">
    <source>
    </source>
</evidence>
<evidence type="ECO:0000312" key="6">
    <source>
        <dbReference type="MGI" id="MGI:1928379"/>
    </source>
</evidence>
<feature type="initiator methionine" description="Removed" evidence="2">
    <location>
        <position position="1"/>
    </location>
</feature>
<feature type="chain" id="PRO_0000152254" description="ATPase GET3">
    <location>
        <begin position="2"/>
        <end position="348"/>
    </location>
</feature>
<feature type="active site" evidence="4">
    <location>
        <position position="74"/>
    </location>
</feature>
<feature type="binding site" evidence="3 4">
    <location>
        <position position="45"/>
    </location>
    <ligand>
        <name>ATP</name>
        <dbReference type="ChEBI" id="CHEBI:30616"/>
        <note>ligand shared between dimeric partners</note>
    </ligand>
</feature>
<feature type="binding site" evidence="3 4">
    <location>
        <position position="46"/>
    </location>
    <ligand>
        <name>ATP</name>
        <dbReference type="ChEBI" id="CHEBI:30616"/>
        <note>ligand shared between dimeric partners</note>
    </ligand>
</feature>
<feature type="binding site" evidence="3 4">
    <location>
        <position position="49"/>
    </location>
    <ligand>
        <name>ATP</name>
        <dbReference type="ChEBI" id="CHEBI:30616"/>
        <note>ligand shared between dimeric partners</note>
    </ligand>
</feature>
<feature type="binding site" evidence="3 4">
    <location>
        <position position="50"/>
    </location>
    <ligand>
        <name>ATP</name>
        <dbReference type="ChEBI" id="CHEBI:30616"/>
        <note>ligand shared between dimeric partners</note>
    </ligand>
</feature>
<feature type="binding site" evidence="3 4">
    <location>
        <position position="51"/>
    </location>
    <ligand>
        <name>ATP</name>
        <dbReference type="ChEBI" id="CHEBI:30616"/>
        <note>ligand shared between dimeric partners</note>
    </ligand>
</feature>
<feature type="binding site" evidence="3 4">
    <location>
        <position position="52"/>
    </location>
    <ligand>
        <name>ATP</name>
        <dbReference type="ChEBI" id="CHEBI:30616"/>
        <note>ligand shared between dimeric partners</note>
    </ligand>
</feature>
<feature type="binding site" evidence="3 4">
    <location>
        <position position="251"/>
    </location>
    <ligand>
        <name>ATP</name>
        <dbReference type="ChEBI" id="CHEBI:30616"/>
        <note>ligand shared between dimeric partners</note>
    </ligand>
</feature>
<feature type="binding site" evidence="3 4">
    <location>
        <position position="278"/>
    </location>
    <ligand>
        <name>ATP</name>
        <dbReference type="ChEBI" id="CHEBI:30616"/>
        <note>ligand shared between dimeric partners</note>
    </ligand>
</feature>
<feature type="binding site" evidence="2 4">
    <location>
        <position position="289"/>
    </location>
    <ligand>
        <name>Zn(2+)</name>
        <dbReference type="ChEBI" id="CHEBI:29105"/>
        <note>ligand shared between dimeric partners</note>
    </ligand>
</feature>
<feature type="binding site" evidence="2 4">
    <location>
        <position position="292"/>
    </location>
    <ligand>
        <name>Zn(2+)</name>
        <dbReference type="ChEBI" id="CHEBI:29105"/>
        <note>ligand shared between dimeric partners</note>
    </ligand>
</feature>
<feature type="binding site" evidence="3">
    <location>
        <position position="319"/>
    </location>
    <ligand>
        <name>ATP</name>
        <dbReference type="ChEBI" id="CHEBI:30616"/>
        <note>ligand shared between dimeric partners</note>
    </ligand>
</feature>
<feature type="binding site" evidence="3">
    <location>
        <position position="321"/>
    </location>
    <ligand>
        <name>ATP</name>
        <dbReference type="ChEBI" id="CHEBI:30616"/>
        <note>ligand shared between dimeric partners</note>
    </ligand>
</feature>
<feature type="modified residue" description="N-acetylalanine" evidence="2">
    <location>
        <position position="2"/>
    </location>
</feature>